<accession>P0CN71</accession>
<accession>Q55SZ9</accession>
<accession>Q5KHD1</accession>
<evidence type="ECO:0000250" key="1"/>
<evidence type="ECO:0000255" key="2"/>
<evidence type="ECO:0000305" key="3"/>
<name>FIS1_CRYNB</name>
<gene>
    <name type="primary">FIS1</name>
    <name type="ordered locus">CNBE0380</name>
</gene>
<feature type="chain" id="PRO_0000410090" description="Mitochondrial fission 1 protein">
    <location>
        <begin position="1"/>
        <end position="154"/>
    </location>
</feature>
<feature type="topological domain" description="Cytoplasmic" evidence="2">
    <location>
        <begin position="1"/>
        <end position="127"/>
    </location>
</feature>
<feature type="transmembrane region" description="Helical" evidence="2">
    <location>
        <begin position="128"/>
        <end position="148"/>
    </location>
</feature>
<feature type="topological domain" description="Mitochondrial intermembrane" evidence="2">
    <location>
        <begin position="149"/>
        <end position="154"/>
    </location>
</feature>
<feature type="repeat" description="TPR">
    <location>
        <begin position="76"/>
        <end position="109"/>
    </location>
</feature>
<dbReference type="EMBL" id="AAEY01000024">
    <property type="protein sequence ID" value="EAL20672.1"/>
    <property type="molecule type" value="Genomic_DNA"/>
</dbReference>
<dbReference type="RefSeq" id="XP_775319.1">
    <property type="nucleotide sequence ID" value="XM_770226.1"/>
</dbReference>
<dbReference type="SMR" id="P0CN71"/>
<dbReference type="EnsemblFungi" id="AAW43445">
    <property type="protein sequence ID" value="AAW43445"/>
    <property type="gene ID" value="CNE00460"/>
</dbReference>
<dbReference type="GeneID" id="4936056"/>
<dbReference type="KEGG" id="cnb:CNBE0380"/>
<dbReference type="VEuPathDB" id="FungiDB:CNBE0380"/>
<dbReference type="HOGENOM" id="CLU_104368_2_0_1"/>
<dbReference type="GO" id="GO:0005741">
    <property type="term" value="C:mitochondrial outer membrane"/>
    <property type="evidence" value="ECO:0007669"/>
    <property type="project" value="UniProtKB-SubCell"/>
</dbReference>
<dbReference type="GO" id="GO:0005778">
    <property type="term" value="C:peroxisomal membrane"/>
    <property type="evidence" value="ECO:0007669"/>
    <property type="project" value="TreeGrafter"/>
</dbReference>
<dbReference type="GO" id="GO:0000422">
    <property type="term" value="P:autophagy of mitochondrion"/>
    <property type="evidence" value="ECO:0007669"/>
    <property type="project" value="TreeGrafter"/>
</dbReference>
<dbReference type="GO" id="GO:0000266">
    <property type="term" value="P:mitochondrial fission"/>
    <property type="evidence" value="ECO:0007669"/>
    <property type="project" value="InterPro"/>
</dbReference>
<dbReference type="GO" id="GO:0016559">
    <property type="term" value="P:peroxisome fission"/>
    <property type="evidence" value="ECO:0007669"/>
    <property type="project" value="TreeGrafter"/>
</dbReference>
<dbReference type="CDD" id="cd12212">
    <property type="entry name" value="Fis1"/>
    <property type="match status" value="1"/>
</dbReference>
<dbReference type="FunFam" id="1.25.40.10:FF:001250">
    <property type="entry name" value="Mitochondrial fission 1 protein"/>
    <property type="match status" value="1"/>
</dbReference>
<dbReference type="Gene3D" id="1.25.40.10">
    <property type="entry name" value="Tetratricopeptide repeat domain"/>
    <property type="match status" value="1"/>
</dbReference>
<dbReference type="InterPro" id="IPR016543">
    <property type="entry name" value="Fis1"/>
</dbReference>
<dbReference type="InterPro" id="IPR033745">
    <property type="entry name" value="Fis1_cytosol"/>
</dbReference>
<dbReference type="InterPro" id="IPR028061">
    <property type="entry name" value="Fis1_TPR_C"/>
</dbReference>
<dbReference type="InterPro" id="IPR028058">
    <property type="entry name" value="Fis1_TPR_N"/>
</dbReference>
<dbReference type="InterPro" id="IPR011990">
    <property type="entry name" value="TPR-like_helical_dom_sf"/>
</dbReference>
<dbReference type="PANTHER" id="PTHR13247:SF0">
    <property type="entry name" value="MITOCHONDRIAL FISSION 1 PROTEIN"/>
    <property type="match status" value="1"/>
</dbReference>
<dbReference type="PANTHER" id="PTHR13247">
    <property type="entry name" value="TETRATRICOPEPTIDE REPEAT PROTEIN 11 TPR REPEAT PROTEIN 11"/>
    <property type="match status" value="1"/>
</dbReference>
<dbReference type="Pfam" id="PF14853">
    <property type="entry name" value="Fis1_TPR_C"/>
    <property type="match status" value="1"/>
</dbReference>
<dbReference type="Pfam" id="PF14852">
    <property type="entry name" value="Fis1_TPR_N"/>
    <property type="match status" value="1"/>
</dbReference>
<dbReference type="PIRSF" id="PIRSF008835">
    <property type="entry name" value="TPR_repeat_11_Fis1"/>
    <property type="match status" value="1"/>
</dbReference>
<dbReference type="SUPFAM" id="SSF48452">
    <property type="entry name" value="TPR-like"/>
    <property type="match status" value="1"/>
</dbReference>
<reference key="1">
    <citation type="journal article" date="2005" name="Science">
        <title>The genome of the basidiomycetous yeast and human pathogen Cryptococcus neoformans.</title>
        <authorList>
            <person name="Loftus B.J."/>
            <person name="Fung E."/>
            <person name="Roncaglia P."/>
            <person name="Rowley D."/>
            <person name="Amedeo P."/>
            <person name="Bruno D."/>
            <person name="Vamathevan J."/>
            <person name="Miranda M."/>
            <person name="Anderson I.J."/>
            <person name="Fraser J.A."/>
            <person name="Allen J.E."/>
            <person name="Bosdet I.E."/>
            <person name="Brent M.R."/>
            <person name="Chiu R."/>
            <person name="Doering T.L."/>
            <person name="Donlin M.J."/>
            <person name="D'Souza C.A."/>
            <person name="Fox D.S."/>
            <person name="Grinberg V."/>
            <person name="Fu J."/>
            <person name="Fukushima M."/>
            <person name="Haas B.J."/>
            <person name="Huang J.C."/>
            <person name="Janbon G."/>
            <person name="Jones S.J.M."/>
            <person name="Koo H.L."/>
            <person name="Krzywinski M.I."/>
            <person name="Kwon-Chung K.J."/>
            <person name="Lengeler K.B."/>
            <person name="Maiti R."/>
            <person name="Marra M.A."/>
            <person name="Marra R.E."/>
            <person name="Mathewson C.A."/>
            <person name="Mitchell T.G."/>
            <person name="Pertea M."/>
            <person name="Riggs F.R."/>
            <person name="Salzberg S.L."/>
            <person name="Schein J.E."/>
            <person name="Shvartsbeyn A."/>
            <person name="Shin H."/>
            <person name="Shumway M."/>
            <person name="Specht C.A."/>
            <person name="Suh B.B."/>
            <person name="Tenney A."/>
            <person name="Utterback T.R."/>
            <person name="Wickes B.L."/>
            <person name="Wortman J.R."/>
            <person name="Wye N.H."/>
            <person name="Kronstad J.W."/>
            <person name="Lodge J.K."/>
            <person name="Heitman J."/>
            <person name="Davis R.W."/>
            <person name="Fraser C.M."/>
            <person name="Hyman R.W."/>
        </authorList>
    </citation>
    <scope>NUCLEOTIDE SEQUENCE [LARGE SCALE GENOMIC DNA]</scope>
    <source>
        <strain>B-3501A</strain>
    </source>
</reference>
<organism>
    <name type="scientific">Cryptococcus neoformans var. neoformans serotype D (strain B-3501A)</name>
    <name type="common">Filobasidiella neoformans</name>
    <dbReference type="NCBI Taxonomy" id="283643"/>
    <lineage>
        <taxon>Eukaryota</taxon>
        <taxon>Fungi</taxon>
        <taxon>Dikarya</taxon>
        <taxon>Basidiomycota</taxon>
        <taxon>Agaricomycotina</taxon>
        <taxon>Tremellomycetes</taxon>
        <taxon>Tremellales</taxon>
        <taxon>Cryptococcaceae</taxon>
        <taxon>Cryptococcus</taxon>
        <taxon>Cryptococcus neoformans species complex</taxon>
    </lineage>
</organism>
<protein>
    <recommendedName>
        <fullName>Mitochondrial fission 1 protein</fullName>
    </recommendedName>
</protein>
<sequence>MPTDLPYAAEAESSLSPDELEVLRRQYYREIEQGHVTIQSKFNYGWGLIKSPSPELETEGVKLLQEIYSASPDHRRECTYYIAVGYYKLRNYAYARKFNNLLLSVEPGNMQAQSLSTLIENAVKRDGLVGIGMITGAVAVVGLIAGSVWKRSRR</sequence>
<keyword id="KW-0472">Membrane</keyword>
<keyword id="KW-0496">Mitochondrion</keyword>
<keyword id="KW-1000">Mitochondrion outer membrane</keyword>
<keyword id="KW-0677">Repeat</keyword>
<keyword id="KW-0802">TPR repeat</keyword>
<keyword id="KW-0812">Transmembrane</keyword>
<keyword id="KW-1133">Transmembrane helix</keyword>
<comment type="function">
    <text evidence="1">Has a role in mitochondrial fission. Has a role in outer membrane fission but not matrix separation (By similarity).</text>
</comment>
<comment type="subcellular location">
    <subcellularLocation>
        <location evidence="1">Mitochondrion outer membrane</location>
        <topology evidence="1">Single-pass membrane protein</topology>
    </subcellularLocation>
</comment>
<comment type="domain">
    <text evidence="1">The C-terminus is required for mitochondrial localization, while the N-terminus is necessary for mitochondrial fission.</text>
</comment>
<comment type="similarity">
    <text evidence="3">Belongs to the FIS1 family.</text>
</comment>
<proteinExistence type="inferred from homology"/>